<organism>
    <name type="scientific">Methylibium petroleiphilum (strain ATCC BAA-1232 / LMG 22953 / PM1)</name>
    <dbReference type="NCBI Taxonomy" id="420662"/>
    <lineage>
        <taxon>Bacteria</taxon>
        <taxon>Pseudomonadati</taxon>
        <taxon>Pseudomonadota</taxon>
        <taxon>Betaproteobacteria</taxon>
        <taxon>Burkholderiales</taxon>
        <taxon>Sphaerotilaceae</taxon>
        <taxon>Methylibium</taxon>
    </lineage>
</organism>
<evidence type="ECO:0000255" key="1">
    <source>
        <dbReference type="HAMAP-Rule" id="MF_01543"/>
    </source>
</evidence>
<accession>A2SKX8</accession>
<sequence length="561" mass="60140">MASDIEIAQKATLRRITQVASDKLGIADEHLEPYGHYKAKLSLDYVDSLKDRPNGKLILVTAISPTPAGEGKTTTTVGLGDALNRIGKKTLVCLREPSLGPVFGMKGGAAGGGHAQVVPMEDINLHFTGDFNAIQLANNLLAAMIDNHIHHGNELDIDVRRITWKRVLDMNDRALRDITCSLGGPGNGYPREDGFDIVVASEVMAIFCLATSIQDLKERLGNIVVGYTRQQKPVTARDLKAHGAMTVLLKDALKPNLVQTLENNPAILHGGPFANIAHGCNSVIATQTSLKLADYVVTEAGFGADLGAEKFIDIKCRKSGLRPDAVVLVATIRALKFHGGVDVKELNTENLDALEKGIANIERHVANIREHYGLPCVVSINNFTFDTPAELKLLQDRMAKHEVPVIVARHWAEGGKGAEDVARAVVEIVEKGQSGAAGFKFVYDESLPLMDKITAIATKIYGAAKVNASAKVAGEIKKLQDAGYGHYPVCVAKTQYSFSTNPSARGAPSGHTIDIREVRLAAGAEFIVMICGDVMTMPGLPKVPSAEKIDLGDDGKVVGLF</sequence>
<reference key="1">
    <citation type="journal article" date="2007" name="J. Bacteriol.">
        <title>Whole-genome analysis of the methyl tert-butyl ether-degrading beta-proteobacterium Methylibium petroleiphilum PM1.</title>
        <authorList>
            <person name="Kane S.R."/>
            <person name="Chakicherla A.Y."/>
            <person name="Chain P.S.G."/>
            <person name="Schmidt R."/>
            <person name="Shin M.W."/>
            <person name="Legler T.C."/>
            <person name="Scow K.M."/>
            <person name="Larimer F.W."/>
            <person name="Lucas S.M."/>
            <person name="Richardson P.M."/>
            <person name="Hristova K.R."/>
        </authorList>
    </citation>
    <scope>NUCLEOTIDE SEQUENCE [LARGE SCALE GENOMIC DNA]</scope>
    <source>
        <strain>ATCC BAA-1232 / LMG 22953 / PM1</strain>
    </source>
</reference>
<comment type="catalytic activity">
    <reaction evidence="1">
        <text>(6S)-5,6,7,8-tetrahydrofolate + formate + ATP = (6R)-10-formyltetrahydrofolate + ADP + phosphate</text>
        <dbReference type="Rhea" id="RHEA:20221"/>
        <dbReference type="ChEBI" id="CHEBI:15740"/>
        <dbReference type="ChEBI" id="CHEBI:30616"/>
        <dbReference type="ChEBI" id="CHEBI:43474"/>
        <dbReference type="ChEBI" id="CHEBI:57453"/>
        <dbReference type="ChEBI" id="CHEBI:195366"/>
        <dbReference type="ChEBI" id="CHEBI:456216"/>
        <dbReference type="EC" id="6.3.4.3"/>
    </reaction>
</comment>
<comment type="pathway">
    <text evidence="1">One-carbon metabolism; tetrahydrofolate interconversion.</text>
</comment>
<comment type="similarity">
    <text evidence="1">Belongs to the formate--tetrahydrofolate ligase family.</text>
</comment>
<protein>
    <recommendedName>
        <fullName evidence="1">Formate--tetrahydrofolate ligase</fullName>
        <ecNumber evidence="1">6.3.4.3</ecNumber>
    </recommendedName>
    <alternativeName>
        <fullName evidence="1">Formyltetrahydrofolate synthetase</fullName>
        <shortName evidence="1">FHS</shortName>
        <shortName evidence="1">FTHFS</shortName>
    </alternativeName>
</protein>
<keyword id="KW-0067">ATP-binding</keyword>
<keyword id="KW-0436">Ligase</keyword>
<keyword id="KW-0547">Nucleotide-binding</keyword>
<keyword id="KW-0554">One-carbon metabolism</keyword>
<keyword id="KW-1185">Reference proteome</keyword>
<dbReference type="EC" id="6.3.4.3" evidence="1"/>
<dbReference type="EMBL" id="CP000555">
    <property type="protein sequence ID" value="ABM96217.1"/>
    <property type="molecule type" value="Genomic_DNA"/>
</dbReference>
<dbReference type="RefSeq" id="WP_011830840.1">
    <property type="nucleotide sequence ID" value="NC_008825.1"/>
</dbReference>
<dbReference type="SMR" id="A2SKX8"/>
<dbReference type="STRING" id="420662.Mpe_A3264"/>
<dbReference type="KEGG" id="mpt:Mpe_A3264"/>
<dbReference type="eggNOG" id="COG2759">
    <property type="taxonomic scope" value="Bacteria"/>
</dbReference>
<dbReference type="HOGENOM" id="CLU_003601_3_3_4"/>
<dbReference type="UniPathway" id="UPA00193"/>
<dbReference type="Proteomes" id="UP000000366">
    <property type="component" value="Chromosome"/>
</dbReference>
<dbReference type="GO" id="GO:0005524">
    <property type="term" value="F:ATP binding"/>
    <property type="evidence" value="ECO:0007669"/>
    <property type="project" value="UniProtKB-UniRule"/>
</dbReference>
<dbReference type="GO" id="GO:0004329">
    <property type="term" value="F:formate-tetrahydrofolate ligase activity"/>
    <property type="evidence" value="ECO:0007669"/>
    <property type="project" value="UniProtKB-UniRule"/>
</dbReference>
<dbReference type="GO" id="GO:0035999">
    <property type="term" value="P:tetrahydrofolate interconversion"/>
    <property type="evidence" value="ECO:0007669"/>
    <property type="project" value="UniProtKB-UniRule"/>
</dbReference>
<dbReference type="CDD" id="cd00477">
    <property type="entry name" value="FTHFS"/>
    <property type="match status" value="1"/>
</dbReference>
<dbReference type="FunFam" id="3.30.1510.10:FF:000001">
    <property type="entry name" value="Formate--tetrahydrofolate ligase"/>
    <property type="match status" value="1"/>
</dbReference>
<dbReference type="FunFam" id="3.10.410.10:FF:000001">
    <property type="entry name" value="Putative formate--tetrahydrofolate ligase"/>
    <property type="match status" value="1"/>
</dbReference>
<dbReference type="Gene3D" id="3.30.1510.10">
    <property type="entry name" value="Domain 2, N(10)-formyltetrahydrofolate synthetase"/>
    <property type="match status" value="1"/>
</dbReference>
<dbReference type="Gene3D" id="3.10.410.10">
    <property type="entry name" value="Formyltetrahydrofolate synthetase, domain 3"/>
    <property type="match status" value="1"/>
</dbReference>
<dbReference type="Gene3D" id="3.40.50.300">
    <property type="entry name" value="P-loop containing nucleotide triphosphate hydrolases"/>
    <property type="match status" value="1"/>
</dbReference>
<dbReference type="HAMAP" id="MF_01543">
    <property type="entry name" value="FTHFS"/>
    <property type="match status" value="1"/>
</dbReference>
<dbReference type="InterPro" id="IPR000559">
    <property type="entry name" value="Formate_THF_ligase"/>
</dbReference>
<dbReference type="InterPro" id="IPR020628">
    <property type="entry name" value="Formate_THF_ligase_CS"/>
</dbReference>
<dbReference type="InterPro" id="IPR027417">
    <property type="entry name" value="P-loop_NTPase"/>
</dbReference>
<dbReference type="NCBIfam" id="NF010030">
    <property type="entry name" value="PRK13505.1"/>
    <property type="match status" value="1"/>
</dbReference>
<dbReference type="Pfam" id="PF01268">
    <property type="entry name" value="FTHFS"/>
    <property type="match status" value="1"/>
</dbReference>
<dbReference type="SUPFAM" id="SSF52540">
    <property type="entry name" value="P-loop containing nucleoside triphosphate hydrolases"/>
    <property type="match status" value="1"/>
</dbReference>
<dbReference type="PROSITE" id="PS00721">
    <property type="entry name" value="FTHFS_1"/>
    <property type="match status" value="1"/>
</dbReference>
<dbReference type="PROSITE" id="PS00722">
    <property type="entry name" value="FTHFS_2"/>
    <property type="match status" value="1"/>
</dbReference>
<feature type="chain" id="PRO_0000293046" description="Formate--tetrahydrofolate ligase">
    <location>
        <begin position="1"/>
        <end position="561"/>
    </location>
</feature>
<feature type="binding site" evidence="1">
    <location>
        <begin position="66"/>
        <end position="73"/>
    </location>
    <ligand>
        <name>ATP</name>
        <dbReference type="ChEBI" id="CHEBI:30616"/>
    </ligand>
</feature>
<gene>
    <name evidence="1" type="primary">fhs</name>
    <name type="ordered locus">Mpe_A3264</name>
</gene>
<name>FTHS_METPP</name>
<proteinExistence type="inferred from homology"/>